<organism>
    <name type="scientific">Kosmotoga olearia (strain ATCC BAA-1733 / DSM 21960 / TBF 19.5.1)</name>
    <dbReference type="NCBI Taxonomy" id="521045"/>
    <lineage>
        <taxon>Bacteria</taxon>
        <taxon>Thermotogati</taxon>
        <taxon>Thermotogota</taxon>
        <taxon>Thermotogae</taxon>
        <taxon>Kosmotogales</taxon>
        <taxon>Kosmotogaceae</taxon>
        <taxon>Kosmotoga</taxon>
    </lineage>
</organism>
<reference key="1">
    <citation type="submission" date="2009-06" db="EMBL/GenBank/DDBJ databases">
        <title>Complete sequence of Thermotogales bacterium TBF 19.5.1.</title>
        <authorList>
            <consortium name="US DOE Joint Genome Institute"/>
            <person name="Lucas S."/>
            <person name="Copeland A."/>
            <person name="Lapidus A."/>
            <person name="Glavina del Rio T."/>
            <person name="Tice H."/>
            <person name="Bruce D."/>
            <person name="Goodwin L."/>
            <person name="Pitluck S."/>
            <person name="Chertkov O."/>
            <person name="Brettin T."/>
            <person name="Detter J.C."/>
            <person name="Han C."/>
            <person name="Schmutz J."/>
            <person name="Larimer F."/>
            <person name="Land M."/>
            <person name="Hauser L."/>
            <person name="Kyrpides N."/>
            <person name="Ovchinnikova G."/>
            <person name="Noll K."/>
        </authorList>
    </citation>
    <scope>NUCLEOTIDE SEQUENCE [LARGE SCALE GENOMIC DNA]</scope>
    <source>
        <strain>ATCC BAA-1733 / DSM 21960 / TBF 19.5.1</strain>
    </source>
</reference>
<feature type="chain" id="PRO_1000206474" description="Probable transaldolase">
    <location>
        <begin position="1"/>
        <end position="218"/>
    </location>
</feature>
<feature type="active site" description="Schiff-base intermediate with substrate" evidence="1">
    <location>
        <position position="83"/>
    </location>
</feature>
<sequence>MRIFLDTANIEEIKKAVAWGVIDGVTTNPTLIAREKAPFTERIKEICETVKGPVSAEVVALDYEGMVKEARDLAMLDEHVVIKIPMTPEGIKAVKTLSSEGIKTNVTLVFSAVQALLAAKAGATYVSPFIGRVDDISSDGLRLVEDIVAIFSNYGFQTNVLAASIRHPMHVLELATIGVDIVTMPFNVLEKLFHHPLTDKGIERFLNDWEEYRKGTGL</sequence>
<gene>
    <name evidence="1" type="primary">tal</name>
    <name type="ordered locus">Kole_1872</name>
</gene>
<name>TAL_KOSOT</name>
<evidence type="ECO:0000255" key="1">
    <source>
        <dbReference type="HAMAP-Rule" id="MF_00494"/>
    </source>
</evidence>
<comment type="function">
    <text evidence="1">Transaldolase is important for the balance of metabolites in the pentose-phosphate pathway.</text>
</comment>
<comment type="catalytic activity">
    <reaction evidence="1">
        <text>D-sedoheptulose 7-phosphate + D-glyceraldehyde 3-phosphate = D-erythrose 4-phosphate + beta-D-fructose 6-phosphate</text>
        <dbReference type="Rhea" id="RHEA:17053"/>
        <dbReference type="ChEBI" id="CHEBI:16897"/>
        <dbReference type="ChEBI" id="CHEBI:57483"/>
        <dbReference type="ChEBI" id="CHEBI:57634"/>
        <dbReference type="ChEBI" id="CHEBI:59776"/>
        <dbReference type="EC" id="2.2.1.2"/>
    </reaction>
</comment>
<comment type="pathway">
    <text evidence="1">Carbohydrate degradation; pentose phosphate pathway; D-glyceraldehyde 3-phosphate and beta-D-fructose 6-phosphate from D-ribose 5-phosphate and D-xylulose 5-phosphate (non-oxidative stage): step 2/3.</text>
</comment>
<comment type="subcellular location">
    <subcellularLocation>
        <location evidence="1">Cytoplasm</location>
    </subcellularLocation>
</comment>
<comment type="similarity">
    <text evidence="1">Belongs to the transaldolase family. Type 3B subfamily.</text>
</comment>
<keyword id="KW-0963">Cytoplasm</keyword>
<keyword id="KW-0570">Pentose shunt</keyword>
<keyword id="KW-1185">Reference proteome</keyword>
<keyword id="KW-0704">Schiff base</keyword>
<keyword id="KW-0808">Transferase</keyword>
<protein>
    <recommendedName>
        <fullName evidence="1">Probable transaldolase</fullName>
        <ecNumber evidence="1">2.2.1.2</ecNumber>
    </recommendedName>
</protein>
<proteinExistence type="inferred from homology"/>
<accession>C5CGH2</accession>
<dbReference type="EC" id="2.2.1.2" evidence="1"/>
<dbReference type="EMBL" id="CP001634">
    <property type="protein sequence ID" value="ACR80553.1"/>
    <property type="molecule type" value="Genomic_DNA"/>
</dbReference>
<dbReference type="SMR" id="C5CGH2"/>
<dbReference type="STRING" id="521045.Kole_1872"/>
<dbReference type="KEGG" id="kol:Kole_1872"/>
<dbReference type="eggNOG" id="COG0176">
    <property type="taxonomic scope" value="Bacteria"/>
</dbReference>
<dbReference type="HOGENOM" id="CLU_079764_0_0_0"/>
<dbReference type="OrthoDB" id="9807051at2"/>
<dbReference type="UniPathway" id="UPA00115">
    <property type="reaction ID" value="UER00414"/>
</dbReference>
<dbReference type="Proteomes" id="UP000002382">
    <property type="component" value="Chromosome"/>
</dbReference>
<dbReference type="GO" id="GO:0005737">
    <property type="term" value="C:cytoplasm"/>
    <property type="evidence" value="ECO:0007669"/>
    <property type="project" value="UniProtKB-SubCell"/>
</dbReference>
<dbReference type="GO" id="GO:0016832">
    <property type="term" value="F:aldehyde-lyase activity"/>
    <property type="evidence" value="ECO:0007669"/>
    <property type="project" value="InterPro"/>
</dbReference>
<dbReference type="GO" id="GO:0004801">
    <property type="term" value="F:transaldolase activity"/>
    <property type="evidence" value="ECO:0007669"/>
    <property type="project" value="UniProtKB-UniRule"/>
</dbReference>
<dbReference type="GO" id="GO:0005975">
    <property type="term" value="P:carbohydrate metabolic process"/>
    <property type="evidence" value="ECO:0007669"/>
    <property type="project" value="InterPro"/>
</dbReference>
<dbReference type="GO" id="GO:0006098">
    <property type="term" value="P:pentose-phosphate shunt"/>
    <property type="evidence" value="ECO:0007669"/>
    <property type="project" value="UniProtKB-UniRule"/>
</dbReference>
<dbReference type="CDD" id="cd00956">
    <property type="entry name" value="Transaldolase_FSA"/>
    <property type="match status" value="1"/>
</dbReference>
<dbReference type="FunFam" id="3.20.20.70:FF:000018">
    <property type="entry name" value="Probable transaldolase"/>
    <property type="match status" value="1"/>
</dbReference>
<dbReference type="Gene3D" id="3.20.20.70">
    <property type="entry name" value="Aldolase class I"/>
    <property type="match status" value="1"/>
</dbReference>
<dbReference type="HAMAP" id="MF_00494">
    <property type="entry name" value="Transaldolase_3b"/>
    <property type="match status" value="1"/>
</dbReference>
<dbReference type="InterPro" id="IPR013785">
    <property type="entry name" value="Aldolase_TIM"/>
</dbReference>
<dbReference type="InterPro" id="IPR001585">
    <property type="entry name" value="TAL/FSA"/>
</dbReference>
<dbReference type="InterPro" id="IPR022999">
    <property type="entry name" value="Transaldolase_3B"/>
</dbReference>
<dbReference type="InterPro" id="IPR004731">
    <property type="entry name" value="Transaldolase_3B/F6P_aldolase"/>
</dbReference>
<dbReference type="InterPro" id="IPR018225">
    <property type="entry name" value="Transaldolase_AS"/>
</dbReference>
<dbReference type="InterPro" id="IPR033919">
    <property type="entry name" value="TSA/FSA_arc/bac"/>
</dbReference>
<dbReference type="NCBIfam" id="TIGR00875">
    <property type="entry name" value="fsa_talC_mipB"/>
    <property type="match status" value="1"/>
</dbReference>
<dbReference type="PANTHER" id="PTHR10683:SF40">
    <property type="entry name" value="FRUCTOSE-6-PHOSPHATE ALDOLASE 1-RELATED"/>
    <property type="match status" value="1"/>
</dbReference>
<dbReference type="PANTHER" id="PTHR10683">
    <property type="entry name" value="TRANSALDOLASE"/>
    <property type="match status" value="1"/>
</dbReference>
<dbReference type="Pfam" id="PF00923">
    <property type="entry name" value="TAL_FSA"/>
    <property type="match status" value="1"/>
</dbReference>
<dbReference type="SUPFAM" id="SSF51569">
    <property type="entry name" value="Aldolase"/>
    <property type="match status" value="1"/>
</dbReference>
<dbReference type="PROSITE" id="PS01054">
    <property type="entry name" value="TRANSALDOLASE_1"/>
    <property type="match status" value="1"/>
</dbReference>
<dbReference type="PROSITE" id="PS00958">
    <property type="entry name" value="TRANSALDOLASE_2"/>
    <property type="match status" value="1"/>
</dbReference>